<accession>B1XBT8</accession>
<organism>
    <name type="scientific">Escherichia coli (strain K12 / DH10B)</name>
    <dbReference type="NCBI Taxonomy" id="316385"/>
    <lineage>
        <taxon>Bacteria</taxon>
        <taxon>Pseudomonadati</taxon>
        <taxon>Pseudomonadota</taxon>
        <taxon>Gammaproteobacteria</taxon>
        <taxon>Enterobacterales</taxon>
        <taxon>Enterobacteriaceae</taxon>
        <taxon>Escherichia</taxon>
    </lineage>
</organism>
<proteinExistence type="inferred from homology"/>
<feature type="chain" id="PRO_1000200174" description="Protein RnfH">
    <location>
        <begin position="1"/>
        <end position="96"/>
    </location>
</feature>
<protein>
    <recommendedName>
        <fullName evidence="1">Protein RnfH</fullName>
    </recommendedName>
</protein>
<name>RNFH_ECODH</name>
<reference key="1">
    <citation type="journal article" date="2008" name="J. Bacteriol.">
        <title>The complete genome sequence of Escherichia coli DH10B: insights into the biology of a laboratory workhorse.</title>
        <authorList>
            <person name="Durfee T."/>
            <person name="Nelson R."/>
            <person name="Baldwin S."/>
            <person name="Plunkett G. III"/>
            <person name="Burland V."/>
            <person name="Mau B."/>
            <person name="Petrosino J.F."/>
            <person name="Qin X."/>
            <person name="Muzny D.M."/>
            <person name="Ayele M."/>
            <person name="Gibbs R.A."/>
            <person name="Csorgo B."/>
            <person name="Posfai G."/>
            <person name="Weinstock G.M."/>
            <person name="Blattner F.R."/>
        </authorList>
    </citation>
    <scope>NUCLEOTIDE SEQUENCE [LARGE SCALE GENOMIC DNA]</scope>
    <source>
        <strain>K12 / DH10B</strain>
    </source>
</reference>
<evidence type="ECO:0000255" key="1">
    <source>
        <dbReference type="HAMAP-Rule" id="MF_00460"/>
    </source>
</evidence>
<dbReference type="EMBL" id="CP000948">
    <property type="protein sequence ID" value="ACB03762.1"/>
    <property type="molecule type" value="Genomic_DNA"/>
</dbReference>
<dbReference type="RefSeq" id="WP_001117838.1">
    <property type="nucleotide sequence ID" value="NC_010473.1"/>
</dbReference>
<dbReference type="SMR" id="B1XBT8"/>
<dbReference type="KEGG" id="ecd:ECDH10B_2784"/>
<dbReference type="HOGENOM" id="CLU_150721_1_0_6"/>
<dbReference type="Gene3D" id="3.10.20.280">
    <property type="entry name" value="RnfH-like"/>
    <property type="match status" value="1"/>
</dbReference>
<dbReference type="HAMAP" id="MF_00460">
    <property type="entry name" value="UPF0125_RnfH"/>
    <property type="match status" value="1"/>
</dbReference>
<dbReference type="InterPro" id="IPR016155">
    <property type="entry name" value="Mopterin_synth/thiamin_S_b"/>
</dbReference>
<dbReference type="InterPro" id="IPR005346">
    <property type="entry name" value="RnfH"/>
</dbReference>
<dbReference type="InterPro" id="IPR037021">
    <property type="entry name" value="RnfH_sf"/>
</dbReference>
<dbReference type="NCBIfam" id="NF002490">
    <property type="entry name" value="PRK01777.1"/>
    <property type="match status" value="1"/>
</dbReference>
<dbReference type="PANTHER" id="PTHR37483">
    <property type="entry name" value="UPF0125 PROTEIN RATB"/>
    <property type="match status" value="1"/>
</dbReference>
<dbReference type="PANTHER" id="PTHR37483:SF1">
    <property type="entry name" value="UPF0125 PROTEIN RATB"/>
    <property type="match status" value="1"/>
</dbReference>
<dbReference type="Pfam" id="PF03658">
    <property type="entry name" value="Ub-RnfH"/>
    <property type="match status" value="1"/>
</dbReference>
<dbReference type="SUPFAM" id="SSF54285">
    <property type="entry name" value="MoaD/ThiS"/>
    <property type="match status" value="1"/>
</dbReference>
<sequence length="96" mass="10789">MPGKIAVEVAYALPEKQYLQRVTLQEGATVEEAIRASGLLELRTDIDLTKNKVGIYSRPAKLSDSVHDGDRVEIYRPLIADPKELRRQRAEKSANK</sequence>
<gene>
    <name evidence="1" type="primary">rnfH</name>
    <name type="ordered locus">ECDH10B_2784</name>
</gene>
<comment type="similarity">
    <text evidence="1">Belongs to the UPF0125 (RnfH) family.</text>
</comment>